<accession>Q8FG45</accession>
<name>UDG_ECOL6</name>
<proteinExistence type="inferred from homology"/>
<comment type="catalytic activity">
    <reaction>
        <text>UDP-alpha-D-glucose + 2 NAD(+) + H2O = UDP-alpha-D-glucuronate + 2 NADH + 3 H(+)</text>
        <dbReference type="Rhea" id="RHEA:23596"/>
        <dbReference type="ChEBI" id="CHEBI:15377"/>
        <dbReference type="ChEBI" id="CHEBI:15378"/>
        <dbReference type="ChEBI" id="CHEBI:57540"/>
        <dbReference type="ChEBI" id="CHEBI:57945"/>
        <dbReference type="ChEBI" id="CHEBI:58052"/>
        <dbReference type="ChEBI" id="CHEBI:58885"/>
        <dbReference type="EC" id="1.1.1.22"/>
    </reaction>
</comment>
<comment type="pathway">
    <text>Nucleotide-sugar biosynthesis; UDP-alpha-D-glucuronate biosynthesis; UDP-alpha-D-glucuronate from UDP-alpha-D-glucose: step 1/1.</text>
</comment>
<comment type="pathway">
    <text>Bacterial outer membrane biogenesis; lipopolysaccharide biosynthesis.</text>
</comment>
<comment type="PTM">
    <text evidence="1">Phosphorylated on a tyrosine residue. It results in a significant increase of the dehydrogenase activity (By similarity).</text>
</comment>
<comment type="similarity">
    <text evidence="4">Belongs to the UDP-glucose/GDP-mannose dehydrogenase family.</text>
</comment>
<reference key="1">
    <citation type="journal article" date="2002" name="Proc. Natl. Acad. Sci. U.S.A.">
        <title>Extensive mosaic structure revealed by the complete genome sequence of uropathogenic Escherichia coli.</title>
        <authorList>
            <person name="Welch R.A."/>
            <person name="Burland V."/>
            <person name="Plunkett G. III"/>
            <person name="Redford P."/>
            <person name="Roesch P."/>
            <person name="Rasko D."/>
            <person name="Buckles E.L."/>
            <person name="Liou S.-R."/>
            <person name="Boutin A."/>
            <person name="Hackett J."/>
            <person name="Stroud D."/>
            <person name="Mayhew G.F."/>
            <person name="Rose D.J."/>
            <person name="Zhou S."/>
            <person name="Schwartz D.C."/>
            <person name="Perna N.T."/>
            <person name="Mobley H.L.T."/>
            <person name="Donnenberg M.S."/>
            <person name="Blattner F.R."/>
        </authorList>
    </citation>
    <scope>NUCLEOTIDE SEQUENCE [LARGE SCALE GENOMIC DNA]</scope>
    <source>
        <strain>CFT073 / ATCC 700928 / UPEC</strain>
    </source>
</reference>
<organism>
    <name type="scientific">Escherichia coli O6:H1 (strain CFT073 / ATCC 700928 / UPEC)</name>
    <dbReference type="NCBI Taxonomy" id="199310"/>
    <lineage>
        <taxon>Bacteria</taxon>
        <taxon>Pseudomonadati</taxon>
        <taxon>Pseudomonadota</taxon>
        <taxon>Gammaproteobacteria</taxon>
        <taxon>Enterobacterales</taxon>
        <taxon>Enterobacteriaceae</taxon>
        <taxon>Escherichia</taxon>
    </lineage>
</organism>
<dbReference type="EC" id="1.1.1.22"/>
<dbReference type="EMBL" id="AE014075">
    <property type="protein sequence ID" value="AAN81010.1"/>
    <property type="molecule type" value="Genomic_DNA"/>
</dbReference>
<dbReference type="RefSeq" id="WP_000704861.1">
    <property type="nucleotide sequence ID" value="NZ_CP051263.1"/>
</dbReference>
<dbReference type="SMR" id="Q8FG45"/>
<dbReference type="STRING" id="199310.c2555"/>
<dbReference type="KEGG" id="ecc:c2555"/>
<dbReference type="eggNOG" id="COG1004">
    <property type="taxonomic scope" value="Bacteria"/>
</dbReference>
<dbReference type="HOGENOM" id="CLU_023810_2_0_6"/>
<dbReference type="BioCyc" id="ECOL199310:C2555-MONOMER"/>
<dbReference type="UniPathway" id="UPA00030"/>
<dbReference type="UniPathway" id="UPA00038">
    <property type="reaction ID" value="UER00491"/>
</dbReference>
<dbReference type="Proteomes" id="UP000001410">
    <property type="component" value="Chromosome"/>
</dbReference>
<dbReference type="GO" id="GO:0051287">
    <property type="term" value="F:NAD binding"/>
    <property type="evidence" value="ECO:0000250"/>
    <property type="project" value="UniProtKB"/>
</dbReference>
<dbReference type="GO" id="GO:0003979">
    <property type="term" value="F:UDP-glucose 6-dehydrogenase activity"/>
    <property type="evidence" value="ECO:0000250"/>
    <property type="project" value="UniProtKB"/>
</dbReference>
<dbReference type="GO" id="GO:0009103">
    <property type="term" value="P:lipopolysaccharide biosynthetic process"/>
    <property type="evidence" value="ECO:0007669"/>
    <property type="project" value="UniProtKB-UniPathway"/>
</dbReference>
<dbReference type="GO" id="GO:0006065">
    <property type="term" value="P:UDP-glucuronate biosynthetic process"/>
    <property type="evidence" value="ECO:0007669"/>
    <property type="project" value="UniProtKB-UniPathway"/>
</dbReference>
<dbReference type="FunFam" id="1.10.1040.10:FF:000026">
    <property type="entry name" value="UDP-glucose 6-dehydrogenase"/>
    <property type="match status" value="1"/>
</dbReference>
<dbReference type="FunFam" id="3.40.50.720:FF:000297">
    <property type="entry name" value="UDP-glucose 6-dehydrogenase"/>
    <property type="match status" value="1"/>
</dbReference>
<dbReference type="FunFam" id="3.40.50.720:FF:000400">
    <property type="entry name" value="UDP-glucose 6-dehydrogenase"/>
    <property type="match status" value="1"/>
</dbReference>
<dbReference type="Gene3D" id="1.10.1040.10">
    <property type="entry name" value="N-(1-d-carboxylethyl)-l-norvaline Dehydrogenase, domain 2"/>
    <property type="match status" value="1"/>
</dbReference>
<dbReference type="Gene3D" id="3.40.50.720">
    <property type="entry name" value="NAD(P)-binding Rossmann-like Domain"/>
    <property type="match status" value="2"/>
</dbReference>
<dbReference type="InterPro" id="IPR008927">
    <property type="entry name" value="6-PGluconate_DH-like_C_sf"/>
</dbReference>
<dbReference type="InterPro" id="IPR013328">
    <property type="entry name" value="6PGD_dom2"/>
</dbReference>
<dbReference type="InterPro" id="IPR036291">
    <property type="entry name" value="NAD(P)-bd_dom_sf"/>
</dbReference>
<dbReference type="InterPro" id="IPR017476">
    <property type="entry name" value="UDP-Glc/GDP-Man"/>
</dbReference>
<dbReference type="InterPro" id="IPR014027">
    <property type="entry name" value="UDP-Glc/GDP-Man_DH_C"/>
</dbReference>
<dbReference type="InterPro" id="IPR036220">
    <property type="entry name" value="UDP-Glc/GDP-Man_DH_C_sf"/>
</dbReference>
<dbReference type="InterPro" id="IPR014026">
    <property type="entry name" value="UDP-Glc/GDP-Man_DH_dimer"/>
</dbReference>
<dbReference type="InterPro" id="IPR001732">
    <property type="entry name" value="UDP-Glc/GDP-Man_DH_N"/>
</dbReference>
<dbReference type="InterPro" id="IPR028357">
    <property type="entry name" value="UDPglc_DH_bac"/>
</dbReference>
<dbReference type="NCBIfam" id="TIGR03026">
    <property type="entry name" value="NDP-sugDHase"/>
    <property type="match status" value="1"/>
</dbReference>
<dbReference type="NCBIfam" id="NF011631">
    <property type="entry name" value="PRK15057.1"/>
    <property type="match status" value="1"/>
</dbReference>
<dbReference type="PANTHER" id="PTHR43750:SF2">
    <property type="entry name" value="UDP-GLUCOSE 6-DEHYDROGENASE"/>
    <property type="match status" value="1"/>
</dbReference>
<dbReference type="PANTHER" id="PTHR43750">
    <property type="entry name" value="UDP-GLUCOSE 6-DEHYDROGENASE TUAD"/>
    <property type="match status" value="1"/>
</dbReference>
<dbReference type="Pfam" id="PF00984">
    <property type="entry name" value="UDPG_MGDP_dh"/>
    <property type="match status" value="1"/>
</dbReference>
<dbReference type="Pfam" id="PF03720">
    <property type="entry name" value="UDPG_MGDP_dh_C"/>
    <property type="match status" value="1"/>
</dbReference>
<dbReference type="Pfam" id="PF03721">
    <property type="entry name" value="UDPG_MGDP_dh_N"/>
    <property type="match status" value="1"/>
</dbReference>
<dbReference type="PIRSF" id="PIRSF500134">
    <property type="entry name" value="UDPglc_DH_bac"/>
    <property type="match status" value="1"/>
</dbReference>
<dbReference type="PIRSF" id="PIRSF000124">
    <property type="entry name" value="UDPglc_GDPman_dh"/>
    <property type="match status" value="1"/>
</dbReference>
<dbReference type="SMART" id="SM00984">
    <property type="entry name" value="UDPG_MGDP_dh_C"/>
    <property type="match status" value="1"/>
</dbReference>
<dbReference type="SUPFAM" id="SSF48179">
    <property type="entry name" value="6-phosphogluconate dehydrogenase C-terminal domain-like"/>
    <property type="match status" value="1"/>
</dbReference>
<dbReference type="SUPFAM" id="SSF51735">
    <property type="entry name" value="NAD(P)-binding Rossmann-fold domains"/>
    <property type="match status" value="1"/>
</dbReference>
<dbReference type="SUPFAM" id="SSF52413">
    <property type="entry name" value="UDP-glucose/GDP-mannose dehydrogenase C-terminal domain"/>
    <property type="match status" value="1"/>
</dbReference>
<feature type="chain" id="PRO_0000074043" description="UDP-glucose 6-dehydrogenase">
    <location>
        <begin position="1"/>
        <end position="388"/>
    </location>
</feature>
<feature type="active site" description="Nucleophile" evidence="2">
    <location>
        <position position="253"/>
    </location>
</feature>
<feature type="binding site" evidence="3">
    <location>
        <begin position="2"/>
        <end position="19"/>
    </location>
    <ligand>
        <name>NAD(+)</name>
        <dbReference type="ChEBI" id="CHEBI:57540"/>
    </ligand>
</feature>
<feature type="binding site" evidence="2">
    <location>
        <position position="11"/>
    </location>
    <ligand>
        <name>NAD(+)</name>
        <dbReference type="ChEBI" id="CHEBI:57540"/>
    </ligand>
</feature>
<feature type="binding site" evidence="2">
    <location>
        <position position="29"/>
    </location>
    <ligand>
        <name>NAD(+)</name>
        <dbReference type="ChEBI" id="CHEBI:57540"/>
    </ligand>
</feature>
<feature type="binding site" evidence="2">
    <location>
        <position position="83"/>
    </location>
    <ligand>
        <name>NAD(+)</name>
        <dbReference type="ChEBI" id="CHEBI:57540"/>
    </ligand>
</feature>
<feature type="binding site" evidence="2">
    <location>
        <position position="118"/>
    </location>
    <ligand>
        <name>NAD(+)</name>
        <dbReference type="ChEBI" id="CHEBI:57540"/>
    </ligand>
</feature>
<feature type="binding site" evidence="2">
    <location>
        <begin position="141"/>
        <end position="145"/>
    </location>
    <ligand>
        <name>substrate</name>
    </ligand>
</feature>
<feature type="binding site" evidence="2">
    <location>
        <position position="145"/>
    </location>
    <ligand>
        <name>NAD(+)</name>
        <dbReference type="ChEBI" id="CHEBI:57540"/>
    </ligand>
</feature>
<feature type="binding site" evidence="2">
    <location>
        <position position="197"/>
    </location>
    <ligand>
        <name>substrate</name>
    </ligand>
</feature>
<feature type="binding site" evidence="2">
    <location>
        <position position="201"/>
    </location>
    <ligand>
        <name>substrate</name>
    </ligand>
</feature>
<feature type="binding site" evidence="2">
    <location>
        <begin position="242"/>
        <end position="246"/>
    </location>
    <ligand>
        <name>substrate</name>
    </ligand>
</feature>
<feature type="binding site" evidence="2">
    <location>
        <position position="250"/>
    </location>
    <ligand>
        <name>substrate</name>
    </ligand>
</feature>
<feature type="binding site" evidence="2">
    <location>
        <position position="252"/>
    </location>
    <ligand>
        <name>NAD(+)</name>
        <dbReference type="ChEBI" id="CHEBI:57540"/>
    </ligand>
</feature>
<feature type="binding site" evidence="2">
    <location>
        <position position="256"/>
    </location>
    <ligand>
        <name>NAD(+)</name>
        <dbReference type="ChEBI" id="CHEBI:57540"/>
    </ligand>
</feature>
<feature type="binding site" evidence="2">
    <location>
        <position position="307"/>
    </location>
    <ligand>
        <name>substrate</name>
    </ligand>
</feature>
<feature type="binding site" evidence="2">
    <location>
        <position position="314"/>
    </location>
    <ligand>
        <name>NAD(+)</name>
        <dbReference type="ChEBI" id="CHEBI:57540"/>
    </ligand>
</feature>
<sequence length="388" mass="43655">MKITISGTGYVGLSNGLLIAQNHEVVALDILPSRVAMLNDRISPIVDKEIQQFLQSDKIHFNATLDKNEAYRDADYVIIATPTDYDPKTNYFNTSSVESVIKDVVEINPYAVMVIKSTVPVGFTAAMHKKYRTENIIFSPEFLREGKALYDNLHPSRIVIGERSERAERFAALLQEGAIKQNIPTLFTDSTEAEAIKLFANTYLAMRVAYFNELDSYAESLGLNTRQIIEGVCLDPRIGNHYNNPSFGYGGYCLPKDTKQLLANYQSVPNNLISAIVDANRTRKDFIADAILSRKPQVVGIYRLIMKSGSDNFRASSIQGIMKRIKAKGVEVIIYEPVMKEDSFFNSRLERDLATFKQQADIIISNRMAEELKDVADKVYTRDLFGSD</sequence>
<gene>
    <name type="primary">ugd</name>
    <name type="ordered locus">c2555</name>
</gene>
<evidence type="ECO:0000250" key="1"/>
<evidence type="ECO:0000250" key="2">
    <source>
        <dbReference type="UniProtKB" id="Q0P8H3"/>
    </source>
</evidence>
<evidence type="ECO:0000255" key="3"/>
<evidence type="ECO:0000305" key="4"/>
<protein>
    <recommendedName>
        <fullName>UDP-glucose 6-dehydrogenase</fullName>
        <shortName>UDP-Glc dehydrogenase</shortName>
        <shortName>UDP-GlcDH</shortName>
        <shortName>UDPGDH</shortName>
        <ecNumber>1.1.1.22</ecNumber>
    </recommendedName>
</protein>
<keyword id="KW-0520">NAD</keyword>
<keyword id="KW-0560">Oxidoreductase</keyword>
<keyword id="KW-0597">Phosphoprotein</keyword>
<keyword id="KW-1185">Reference proteome</keyword>